<keyword id="KW-0210">Decarboxylase</keyword>
<keyword id="KW-0456">Lyase</keyword>
<keyword id="KW-0460">Magnesium</keyword>
<keyword id="KW-0479">Metal-binding</keyword>
<keyword id="KW-0620">Polyamine biosynthesis</keyword>
<keyword id="KW-0661">Putrescine biosynthesis</keyword>
<keyword id="KW-0663">Pyridoxal phosphate</keyword>
<keyword id="KW-0745">Spermidine biosynthesis</keyword>
<gene>
    <name evidence="1" type="primary">speA</name>
    <name type="ordered locus">SeSA_A3260</name>
</gene>
<accession>B4TV55</accession>
<reference key="1">
    <citation type="journal article" date="2011" name="J. Bacteriol.">
        <title>Comparative genomics of 28 Salmonella enterica isolates: evidence for CRISPR-mediated adaptive sublineage evolution.</title>
        <authorList>
            <person name="Fricke W.F."/>
            <person name="Mammel M.K."/>
            <person name="McDermott P.F."/>
            <person name="Tartera C."/>
            <person name="White D.G."/>
            <person name="Leclerc J.E."/>
            <person name="Ravel J."/>
            <person name="Cebula T.A."/>
        </authorList>
    </citation>
    <scope>NUCLEOTIDE SEQUENCE [LARGE SCALE GENOMIC DNA]</scope>
    <source>
        <strain>CVM19633</strain>
    </source>
</reference>
<name>SPEA_SALSV</name>
<proteinExistence type="inferred from homology"/>
<feature type="chain" id="PRO_1000145602" description="Biosynthetic arginine decarboxylase">
    <location>
        <begin position="1"/>
        <end position="632"/>
    </location>
</feature>
<feature type="binding site" evidence="1">
    <location>
        <begin position="281"/>
        <end position="291"/>
    </location>
    <ligand>
        <name>substrate</name>
    </ligand>
</feature>
<feature type="modified residue" description="N6-(pyridoxal phosphate)lysine" evidence="1">
    <location>
        <position position="101"/>
    </location>
</feature>
<dbReference type="EC" id="4.1.1.19" evidence="1"/>
<dbReference type="EMBL" id="CP001127">
    <property type="protein sequence ID" value="ACF90655.1"/>
    <property type="molecule type" value="Genomic_DNA"/>
</dbReference>
<dbReference type="SMR" id="B4TV55"/>
<dbReference type="KEGG" id="sew:SeSA_A3260"/>
<dbReference type="HOGENOM" id="CLU_027243_1_0_6"/>
<dbReference type="UniPathway" id="UPA00186">
    <property type="reaction ID" value="UER00284"/>
</dbReference>
<dbReference type="Proteomes" id="UP000001865">
    <property type="component" value="Chromosome"/>
</dbReference>
<dbReference type="GO" id="GO:0008792">
    <property type="term" value="F:arginine decarboxylase activity"/>
    <property type="evidence" value="ECO:0007669"/>
    <property type="project" value="UniProtKB-UniRule"/>
</dbReference>
<dbReference type="GO" id="GO:0046872">
    <property type="term" value="F:metal ion binding"/>
    <property type="evidence" value="ECO:0007669"/>
    <property type="project" value="UniProtKB-KW"/>
</dbReference>
<dbReference type="GO" id="GO:0006527">
    <property type="term" value="P:arginine catabolic process"/>
    <property type="evidence" value="ECO:0007669"/>
    <property type="project" value="InterPro"/>
</dbReference>
<dbReference type="GO" id="GO:0033388">
    <property type="term" value="P:putrescine biosynthetic process from arginine"/>
    <property type="evidence" value="ECO:0007669"/>
    <property type="project" value="TreeGrafter"/>
</dbReference>
<dbReference type="GO" id="GO:0008295">
    <property type="term" value="P:spermidine biosynthetic process"/>
    <property type="evidence" value="ECO:0007669"/>
    <property type="project" value="UniProtKB-UniRule"/>
</dbReference>
<dbReference type="CDD" id="cd06830">
    <property type="entry name" value="PLPDE_III_ADC"/>
    <property type="match status" value="1"/>
</dbReference>
<dbReference type="FunFam" id="1.10.287.3440:FF:000001">
    <property type="entry name" value="Biosynthetic arginine decarboxylase"/>
    <property type="match status" value="1"/>
</dbReference>
<dbReference type="FunFam" id="1.20.58.930:FF:000001">
    <property type="entry name" value="Biosynthetic arginine decarboxylase"/>
    <property type="match status" value="1"/>
</dbReference>
<dbReference type="FunFam" id="2.40.37.10:FF:000001">
    <property type="entry name" value="Biosynthetic arginine decarboxylase"/>
    <property type="match status" value="1"/>
</dbReference>
<dbReference type="FunFam" id="3.20.20.10:FF:000001">
    <property type="entry name" value="Biosynthetic arginine decarboxylase"/>
    <property type="match status" value="1"/>
</dbReference>
<dbReference type="Gene3D" id="1.10.287.3440">
    <property type="match status" value="1"/>
</dbReference>
<dbReference type="Gene3D" id="1.20.58.930">
    <property type="match status" value="1"/>
</dbReference>
<dbReference type="Gene3D" id="3.20.20.10">
    <property type="entry name" value="Alanine racemase"/>
    <property type="match status" value="1"/>
</dbReference>
<dbReference type="Gene3D" id="2.40.37.10">
    <property type="entry name" value="Lyase, Ornithine Decarboxylase, Chain A, domain 1"/>
    <property type="match status" value="1"/>
</dbReference>
<dbReference type="HAMAP" id="MF_01417">
    <property type="entry name" value="SpeA"/>
    <property type="match status" value="1"/>
</dbReference>
<dbReference type="InterPro" id="IPR009006">
    <property type="entry name" value="Ala_racemase/Decarboxylase_C"/>
</dbReference>
<dbReference type="InterPro" id="IPR040634">
    <property type="entry name" value="Arg_decarb_HB"/>
</dbReference>
<dbReference type="InterPro" id="IPR041128">
    <property type="entry name" value="Arg_decarbox_C"/>
</dbReference>
<dbReference type="InterPro" id="IPR002985">
    <property type="entry name" value="Arg_decrbxlase"/>
</dbReference>
<dbReference type="InterPro" id="IPR022657">
    <property type="entry name" value="De-COase2_CS"/>
</dbReference>
<dbReference type="InterPro" id="IPR022644">
    <property type="entry name" value="De-COase2_N"/>
</dbReference>
<dbReference type="InterPro" id="IPR022653">
    <property type="entry name" value="De-COase2_pyr-phos_BS"/>
</dbReference>
<dbReference type="InterPro" id="IPR000183">
    <property type="entry name" value="Orn/DAP/Arg_de-COase"/>
</dbReference>
<dbReference type="InterPro" id="IPR029066">
    <property type="entry name" value="PLP-binding_barrel"/>
</dbReference>
<dbReference type="NCBIfam" id="NF003763">
    <property type="entry name" value="PRK05354.1"/>
    <property type="match status" value="1"/>
</dbReference>
<dbReference type="NCBIfam" id="TIGR01273">
    <property type="entry name" value="speA"/>
    <property type="match status" value="1"/>
</dbReference>
<dbReference type="PANTHER" id="PTHR43295">
    <property type="entry name" value="ARGININE DECARBOXYLASE"/>
    <property type="match status" value="1"/>
</dbReference>
<dbReference type="PANTHER" id="PTHR43295:SF9">
    <property type="entry name" value="BIOSYNTHETIC ARGININE DECARBOXYLASE"/>
    <property type="match status" value="1"/>
</dbReference>
<dbReference type="Pfam" id="PF17810">
    <property type="entry name" value="Arg_decarb_HB"/>
    <property type="match status" value="1"/>
</dbReference>
<dbReference type="Pfam" id="PF17944">
    <property type="entry name" value="Arg_decarbox_C"/>
    <property type="match status" value="1"/>
</dbReference>
<dbReference type="Pfam" id="PF02784">
    <property type="entry name" value="Orn_Arg_deC_N"/>
    <property type="match status" value="1"/>
</dbReference>
<dbReference type="PIRSF" id="PIRSF001336">
    <property type="entry name" value="Arg_decrbxlase"/>
    <property type="match status" value="1"/>
</dbReference>
<dbReference type="PRINTS" id="PR01180">
    <property type="entry name" value="ARGDCRBXLASE"/>
</dbReference>
<dbReference type="PRINTS" id="PR01179">
    <property type="entry name" value="ODADCRBXLASE"/>
</dbReference>
<dbReference type="SUPFAM" id="SSF50621">
    <property type="entry name" value="Alanine racemase C-terminal domain-like"/>
    <property type="match status" value="1"/>
</dbReference>
<dbReference type="SUPFAM" id="SSF51419">
    <property type="entry name" value="PLP-binding barrel"/>
    <property type="match status" value="1"/>
</dbReference>
<dbReference type="PROSITE" id="PS00878">
    <property type="entry name" value="ODR_DC_2_1"/>
    <property type="match status" value="1"/>
</dbReference>
<dbReference type="PROSITE" id="PS00879">
    <property type="entry name" value="ODR_DC_2_2"/>
    <property type="match status" value="1"/>
</dbReference>
<protein>
    <recommendedName>
        <fullName evidence="1">Biosynthetic arginine decarboxylase</fullName>
        <shortName evidence="1">ADC</shortName>
        <ecNumber evidence="1">4.1.1.19</ecNumber>
    </recommendedName>
</protein>
<evidence type="ECO:0000255" key="1">
    <source>
        <dbReference type="HAMAP-Rule" id="MF_01417"/>
    </source>
</evidence>
<sequence>MSSQEASKMLRTYNIAWWGNNYYDVNELGHISVCPDPDVPEARVDLAKLVKAREAQGQRLPALFCFPQILQHRLRSINAAFKRARESYGYNGDYFLVYPIKVNQHRRVIESLIHSGEPLGLEAGSKAELMAVLAHAGMTRSVIVCNGYKDREYIRLALIGEKMGHKVYLVIEKMSEIAIVLEEAERLNVVPRLGVRARLASQGSGKWQSSGGEKSKFGLAATQVLQLVETLRDAGRLDSLQLLHFHLGSQMANIRDIATGVRESARFYVELHKLGVNIQCFDVGGGLGVDYEGTRSQSDCSVNYGLNEYANNIIWAIGDACEEHGLPHPTVITESGRAVTAHHTVLVSNIIGVERNEYTDPTAPAEDAPRALQNLWETWQEMHKPGTRRSLREWLHDSQMDLHDIHIGYSSGAFSLQERAWAEQLYLSMCHEVQKQLDPQNRAHRPIIDELQERMADKMYVNFSLFQSMPDAWGIDQLFPVLPLEGLDQVPERRAVLLDITCDSDGAIDHYIDGDGIATTMPMPEYDPENPPMLGFFMVGAYQEILGNMHNLFGDTEAVDVFVFPDGSVEVELSDEGDTVADMLQYVQLDPKTLLTHFRDQVKQTDLDDALQQQFLEEFEAGLYGYTYLEDE</sequence>
<organism>
    <name type="scientific">Salmonella schwarzengrund (strain CVM19633)</name>
    <dbReference type="NCBI Taxonomy" id="439843"/>
    <lineage>
        <taxon>Bacteria</taxon>
        <taxon>Pseudomonadati</taxon>
        <taxon>Pseudomonadota</taxon>
        <taxon>Gammaproteobacteria</taxon>
        <taxon>Enterobacterales</taxon>
        <taxon>Enterobacteriaceae</taxon>
        <taxon>Salmonella</taxon>
    </lineage>
</organism>
<comment type="function">
    <text evidence="1">Catalyzes the biosynthesis of agmatine from arginine.</text>
</comment>
<comment type="catalytic activity">
    <reaction evidence="1">
        <text>L-arginine + H(+) = agmatine + CO2</text>
        <dbReference type="Rhea" id="RHEA:17641"/>
        <dbReference type="ChEBI" id="CHEBI:15378"/>
        <dbReference type="ChEBI" id="CHEBI:16526"/>
        <dbReference type="ChEBI" id="CHEBI:32682"/>
        <dbReference type="ChEBI" id="CHEBI:58145"/>
        <dbReference type="EC" id="4.1.1.19"/>
    </reaction>
</comment>
<comment type="cofactor">
    <cofactor evidence="1">
        <name>Mg(2+)</name>
        <dbReference type="ChEBI" id="CHEBI:18420"/>
    </cofactor>
</comment>
<comment type="cofactor">
    <cofactor evidence="1">
        <name>pyridoxal 5'-phosphate</name>
        <dbReference type="ChEBI" id="CHEBI:597326"/>
    </cofactor>
</comment>
<comment type="pathway">
    <text evidence="1">Amine and polyamine biosynthesis; agmatine biosynthesis; agmatine from L-arginine: step 1/1.</text>
</comment>
<comment type="similarity">
    <text evidence="1">Belongs to the Orn/Lys/Arg decarboxylase class-II family. SpeA subfamily.</text>
</comment>